<proteinExistence type="inferred from homology"/>
<organism>
    <name type="scientific">Petrotoga mobilis (strain DSM 10674 / SJ95)</name>
    <dbReference type="NCBI Taxonomy" id="403833"/>
    <lineage>
        <taxon>Bacteria</taxon>
        <taxon>Thermotogati</taxon>
        <taxon>Thermotogota</taxon>
        <taxon>Thermotogae</taxon>
        <taxon>Petrotogales</taxon>
        <taxon>Petrotogaceae</taxon>
        <taxon>Petrotoga</taxon>
    </lineage>
</organism>
<name>GUAA_PETMO</name>
<protein>
    <recommendedName>
        <fullName evidence="1">GMP synthase [glutamine-hydrolyzing]</fullName>
        <ecNumber evidence="1">6.3.5.2</ecNumber>
    </recommendedName>
    <alternativeName>
        <fullName evidence="1">GMP synthetase</fullName>
    </alternativeName>
    <alternativeName>
        <fullName evidence="1">Glutamine amidotransferase</fullName>
    </alternativeName>
</protein>
<comment type="function">
    <text evidence="1">Catalyzes the synthesis of GMP from XMP.</text>
</comment>
<comment type="catalytic activity">
    <reaction evidence="1">
        <text>XMP + L-glutamine + ATP + H2O = GMP + L-glutamate + AMP + diphosphate + 2 H(+)</text>
        <dbReference type="Rhea" id="RHEA:11680"/>
        <dbReference type="ChEBI" id="CHEBI:15377"/>
        <dbReference type="ChEBI" id="CHEBI:15378"/>
        <dbReference type="ChEBI" id="CHEBI:29985"/>
        <dbReference type="ChEBI" id="CHEBI:30616"/>
        <dbReference type="ChEBI" id="CHEBI:33019"/>
        <dbReference type="ChEBI" id="CHEBI:57464"/>
        <dbReference type="ChEBI" id="CHEBI:58115"/>
        <dbReference type="ChEBI" id="CHEBI:58359"/>
        <dbReference type="ChEBI" id="CHEBI:456215"/>
        <dbReference type="EC" id="6.3.5.2"/>
    </reaction>
</comment>
<comment type="pathway">
    <text evidence="1">Purine metabolism; GMP biosynthesis; GMP from XMP (L-Gln route): step 1/1.</text>
</comment>
<comment type="subunit">
    <text evidence="1">Homodimer.</text>
</comment>
<accession>A9BER7</accession>
<feature type="chain" id="PRO_1000120353" description="GMP synthase [glutamine-hydrolyzing]">
    <location>
        <begin position="1"/>
        <end position="507"/>
    </location>
</feature>
<feature type="domain" description="Glutamine amidotransferase type-1" evidence="1">
    <location>
        <begin position="3"/>
        <end position="190"/>
    </location>
</feature>
<feature type="domain" description="GMPS ATP-PPase" evidence="1">
    <location>
        <begin position="191"/>
        <end position="382"/>
    </location>
</feature>
<feature type="active site" description="Nucleophile" evidence="1">
    <location>
        <position position="77"/>
    </location>
</feature>
<feature type="active site" evidence="1">
    <location>
        <position position="164"/>
    </location>
</feature>
<feature type="active site" evidence="1">
    <location>
        <position position="166"/>
    </location>
</feature>
<feature type="binding site" evidence="1">
    <location>
        <begin position="218"/>
        <end position="224"/>
    </location>
    <ligand>
        <name>ATP</name>
        <dbReference type="ChEBI" id="CHEBI:30616"/>
    </ligand>
</feature>
<reference key="1">
    <citation type="submission" date="2007-11" db="EMBL/GenBank/DDBJ databases">
        <title>Complete sequence of Petroga mobilis SJ95.</title>
        <authorList>
            <consortium name="US DOE Joint Genome Institute"/>
            <person name="Copeland A."/>
            <person name="Lucas S."/>
            <person name="Lapidus A."/>
            <person name="Barry K."/>
            <person name="Glavina del Rio T."/>
            <person name="Dalin E."/>
            <person name="Tice H."/>
            <person name="Pitluck S."/>
            <person name="Meincke L."/>
            <person name="Brettin T."/>
            <person name="Bruce D."/>
            <person name="Detter J.C."/>
            <person name="Han C."/>
            <person name="Kuske C.R."/>
            <person name="Schmutz J."/>
            <person name="Larimer F."/>
            <person name="Land M."/>
            <person name="Hauser L."/>
            <person name="Kyrpides N."/>
            <person name="Mikhailova N."/>
            <person name="Noll K."/>
            <person name="Richardson P."/>
        </authorList>
    </citation>
    <scope>NUCLEOTIDE SEQUENCE [LARGE SCALE GENOMIC DNA]</scope>
    <source>
        <strain>DSM 10674 / SJ95</strain>
    </source>
</reference>
<dbReference type="EC" id="6.3.5.2" evidence="1"/>
<dbReference type="EMBL" id="CP000879">
    <property type="protein sequence ID" value="ABX30795.1"/>
    <property type="molecule type" value="Genomic_DNA"/>
</dbReference>
<dbReference type="RefSeq" id="WP_012207902.1">
    <property type="nucleotide sequence ID" value="NC_010003.1"/>
</dbReference>
<dbReference type="SMR" id="A9BER7"/>
<dbReference type="STRING" id="403833.Pmob_0046"/>
<dbReference type="KEGG" id="pmo:Pmob_0046"/>
<dbReference type="eggNOG" id="COG0518">
    <property type="taxonomic scope" value="Bacteria"/>
</dbReference>
<dbReference type="eggNOG" id="COG0519">
    <property type="taxonomic scope" value="Bacteria"/>
</dbReference>
<dbReference type="HOGENOM" id="CLU_014340_0_5_0"/>
<dbReference type="OrthoDB" id="9802219at2"/>
<dbReference type="UniPathway" id="UPA00189">
    <property type="reaction ID" value="UER00296"/>
</dbReference>
<dbReference type="Proteomes" id="UP000000789">
    <property type="component" value="Chromosome"/>
</dbReference>
<dbReference type="GO" id="GO:0005829">
    <property type="term" value="C:cytosol"/>
    <property type="evidence" value="ECO:0007669"/>
    <property type="project" value="TreeGrafter"/>
</dbReference>
<dbReference type="GO" id="GO:0005524">
    <property type="term" value="F:ATP binding"/>
    <property type="evidence" value="ECO:0007669"/>
    <property type="project" value="UniProtKB-UniRule"/>
</dbReference>
<dbReference type="GO" id="GO:0003921">
    <property type="term" value="F:GMP synthase activity"/>
    <property type="evidence" value="ECO:0007669"/>
    <property type="project" value="InterPro"/>
</dbReference>
<dbReference type="CDD" id="cd01742">
    <property type="entry name" value="GATase1_GMP_Synthase"/>
    <property type="match status" value="1"/>
</dbReference>
<dbReference type="CDD" id="cd01997">
    <property type="entry name" value="GMP_synthase_C"/>
    <property type="match status" value="1"/>
</dbReference>
<dbReference type="FunFam" id="3.30.300.10:FF:000002">
    <property type="entry name" value="GMP synthase [glutamine-hydrolyzing]"/>
    <property type="match status" value="1"/>
</dbReference>
<dbReference type="FunFam" id="3.40.50.620:FF:000001">
    <property type="entry name" value="GMP synthase [glutamine-hydrolyzing]"/>
    <property type="match status" value="1"/>
</dbReference>
<dbReference type="FunFam" id="3.40.50.880:FF:000001">
    <property type="entry name" value="GMP synthase [glutamine-hydrolyzing]"/>
    <property type="match status" value="1"/>
</dbReference>
<dbReference type="Gene3D" id="3.30.300.10">
    <property type="match status" value="1"/>
</dbReference>
<dbReference type="Gene3D" id="3.40.50.880">
    <property type="match status" value="1"/>
</dbReference>
<dbReference type="Gene3D" id="3.40.50.620">
    <property type="entry name" value="HUPs"/>
    <property type="match status" value="1"/>
</dbReference>
<dbReference type="HAMAP" id="MF_00344">
    <property type="entry name" value="GMP_synthase"/>
    <property type="match status" value="1"/>
</dbReference>
<dbReference type="InterPro" id="IPR029062">
    <property type="entry name" value="Class_I_gatase-like"/>
</dbReference>
<dbReference type="InterPro" id="IPR017926">
    <property type="entry name" value="GATASE"/>
</dbReference>
<dbReference type="InterPro" id="IPR001674">
    <property type="entry name" value="GMP_synth_C"/>
</dbReference>
<dbReference type="InterPro" id="IPR004739">
    <property type="entry name" value="GMP_synth_GATase"/>
</dbReference>
<dbReference type="InterPro" id="IPR022955">
    <property type="entry name" value="GMP_synthase"/>
</dbReference>
<dbReference type="InterPro" id="IPR025777">
    <property type="entry name" value="GMPS_ATP_PPase_dom"/>
</dbReference>
<dbReference type="InterPro" id="IPR022310">
    <property type="entry name" value="NAD/GMP_synthase"/>
</dbReference>
<dbReference type="InterPro" id="IPR014729">
    <property type="entry name" value="Rossmann-like_a/b/a_fold"/>
</dbReference>
<dbReference type="NCBIfam" id="TIGR00884">
    <property type="entry name" value="guaA_Cterm"/>
    <property type="match status" value="1"/>
</dbReference>
<dbReference type="NCBIfam" id="TIGR00888">
    <property type="entry name" value="guaA_Nterm"/>
    <property type="match status" value="1"/>
</dbReference>
<dbReference type="NCBIfam" id="NF000848">
    <property type="entry name" value="PRK00074.1"/>
    <property type="match status" value="1"/>
</dbReference>
<dbReference type="PANTHER" id="PTHR11922:SF2">
    <property type="entry name" value="GMP SYNTHASE [GLUTAMINE-HYDROLYZING]"/>
    <property type="match status" value="1"/>
</dbReference>
<dbReference type="PANTHER" id="PTHR11922">
    <property type="entry name" value="GMP SYNTHASE-RELATED"/>
    <property type="match status" value="1"/>
</dbReference>
<dbReference type="Pfam" id="PF00117">
    <property type="entry name" value="GATase"/>
    <property type="match status" value="1"/>
</dbReference>
<dbReference type="Pfam" id="PF00958">
    <property type="entry name" value="GMP_synt_C"/>
    <property type="match status" value="1"/>
</dbReference>
<dbReference type="Pfam" id="PF02540">
    <property type="entry name" value="NAD_synthase"/>
    <property type="match status" value="1"/>
</dbReference>
<dbReference type="PRINTS" id="PR00097">
    <property type="entry name" value="ANTSNTHASEII"/>
</dbReference>
<dbReference type="PRINTS" id="PR00099">
    <property type="entry name" value="CPSGATASE"/>
</dbReference>
<dbReference type="PRINTS" id="PR00096">
    <property type="entry name" value="GATASE"/>
</dbReference>
<dbReference type="SUPFAM" id="SSF52402">
    <property type="entry name" value="Adenine nucleotide alpha hydrolases-like"/>
    <property type="match status" value="1"/>
</dbReference>
<dbReference type="SUPFAM" id="SSF52317">
    <property type="entry name" value="Class I glutamine amidotransferase-like"/>
    <property type="match status" value="1"/>
</dbReference>
<dbReference type="SUPFAM" id="SSF54810">
    <property type="entry name" value="GMP synthetase C-terminal dimerisation domain"/>
    <property type="match status" value="1"/>
</dbReference>
<dbReference type="PROSITE" id="PS51273">
    <property type="entry name" value="GATASE_TYPE_1"/>
    <property type="match status" value="1"/>
</dbReference>
<dbReference type="PROSITE" id="PS51553">
    <property type="entry name" value="GMPS_ATP_PPASE"/>
    <property type="match status" value="1"/>
</dbReference>
<keyword id="KW-0067">ATP-binding</keyword>
<keyword id="KW-0315">Glutamine amidotransferase</keyword>
<keyword id="KW-0332">GMP biosynthesis</keyword>
<keyword id="KW-0436">Ligase</keyword>
<keyword id="KW-0547">Nucleotide-binding</keyword>
<keyword id="KW-0658">Purine biosynthesis</keyword>
<gene>
    <name evidence="1" type="primary">guaA</name>
    <name type="ordered locus">Pmob_0046</name>
</gene>
<sequence length="507" mass="57011">MEKILVIDYGSQYTQLLAKRIRDLGVFSEVIQYDDNISLSNVKGIILSGGPDSVYNIDAPDISDEILNAELPILGICYGMQLIAKKLGGKVEQRGIAEYGKTKINITDQSLLFKKIPSTFNVWMSHKDMVTKVPEKFKITSLTSNNIISSFENESENIYCIQFHPEVRHTEFGIDILKNFIQGICGLKGSWTLMDFVENKIKEIKDTIGDKKAIIALSGGVDSSVAAVLTHRAIGNNLKAIFVNHGFLRMNEVEEVESTFRDYMGLNLTTVDAQERFLSKLKGVTDPEQKRKIIGEEFIRVFEQEAKKEEGCEYLIQGTIYSDVIESAKSGKKTFKIKSHHNVGGLPEDIDLKIVEPLKELFKDEVRSVGEILGLPREILYRHPFPGPGLAIRIMGEINDEKLTILKKVDNIFINTLKETGWYDKVWQAFAVLIPVKTVGITGDKRSYGYVAALRSVDSVEGMTADWSKVPFEILDLVSSRITNEVEEITRVVYDISSKPPATIEWE</sequence>
<evidence type="ECO:0000255" key="1">
    <source>
        <dbReference type="HAMAP-Rule" id="MF_00344"/>
    </source>
</evidence>